<dbReference type="EMBL" id="X66084">
    <property type="protein sequence ID" value="CAA46883.1"/>
    <property type="molecule type" value="mRNA"/>
</dbReference>
<dbReference type="EMBL" id="X66083">
    <property type="protein sequence ID" value="CAA46882.1"/>
    <property type="molecule type" value="mRNA"/>
</dbReference>
<dbReference type="EMBL" id="X66082">
    <property type="protein sequence ID" value="CAA46881.1"/>
    <property type="molecule type" value="mRNA"/>
</dbReference>
<dbReference type="EMBL" id="X66081">
    <property type="protein sequence ID" value="CAA46880.1"/>
    <property type="molecule type" value="mRNA"/>
</dbReference>
<dbReference type="EMBL" id="M30655">
    <property type="protein sequence ID" value="AAA39922.1"/>
    <property type="molecule type" value="mRNA"/>
</dbReference>
<dbReference type="EMBL" id="M27129">
    <property type="protein sequence ID" value="AAA37406.1"/>
    <property type="molecule type" value="mRNA"/>
</dbReference>
<dbReference type="EMBL" id="M27130">
    <property type="protein sequence ID" value="AAA37407.1"/>
    <property type="molecule type" value="mRNA"/>
</dbReference>
<dbReference type="EMBL" id="AJ251594">
    <property type="protein sequence ID" value="CAB61888.1"/>
    <property type="molecule type" value="mRNA"/>
</dbReference>
<dbReference type="EMBL" id="BC005676">
    <property type="protein sequence ID" value="AAH05676.1"/>
    <property type="molecule type" value="mRNA"/>
</dbReference>
<dbReference type="EMBL" id="AK045226">
    <property type="protein sequence ID" value="BAC32269.1"/>
    <property type="molecule type" value="mRNA"/>
</dbReference>
<dbReference type="EMBL" id="J05163">
    <property type="protein sequence ID" value="AAA39923.1"/>
    <property type="molecule type" value="mRNA"/>
</dbReference>
<dbReference type="EMBL" id="X69724">
    <property type="protein sequence ID" value="CAA49380.1"/>
    <property type="molecule type" value="mRNA"/>
</dbReference>
<dbReference type="EMBL" id="L13611">
    <property type="protein sequence ID" value="AAA37145.1"/>
    <property type="molecule type" value="mRNA"/>
</dbReference>
<dbReference type="EMBL" id="U57610">
    <property type="protein sequence ID" value="AAC52804.1"/>
    <property type="molecule type" value="mRNA"/>
</dbReference>
<dbReference type="EMBL" id="U57611">
    <property type="protein sequence ID" value="AAB08756.1"/>
    <property type="molecule type" value="mRNA"/>
</dbReference>
<dbReference type="EMBL" id="U57612">
    <property type="protein sequence ID" value="AAC52805.1"/>
    <property type="molecule type" value="Genomic_DNA"/>
</dbReference>
<dbReference type="EMBL" id="U57612">
    <property type="protein sequence ID" value="AAC52806.1"/>
    <property type="molecule type" value="Genomic_DNA"/>
</dbReference>
<dbReference type="PIR" id="A34424">
    <property type="entry name" value="A34424"/>
</dbReference>
<dbReference type="PIR" id="A37009">
    <property type="entry name" value="A37009"/>
</dbReference>
<dbReference type="PIR" id="B44355">
    <property type="entry name" value="B44355"/>
</dbReference>
<dbReference type="PIR" id="D44355">
    <property type="entry name" value="D44355"/>
</dbReference>
<dbReference type="PIR" id="S30397">
    <property type="entry name" value="S30397"/>
</dbReference>
<dbReference type="RefSeq" id="NP_001034240.1">
    <property type="nucleotide sequence ID" value="NM_001039151.1"/>
</dbReference>
<dbReference type="RefSeq" id="NP_001171256.1">
    <property type="nucleotide sequence ID" value="NM_001177785.1"/>
</dbReference>
<dbReference type="RefSeq" id="NP_001171257.1">
    <property type="nucleotide sequence ID" value="NM_001177786.1"/>
</dbReference>
<dbReference type="RefSeq" id="NP_001171258.1">
    <property type="nucleotide sequence ID" value="NM_001177787.1"/>
</dbReference>
<dbReference type="RefSeq" id="NP_033981.2">
    <property type="nucleotide sequence ID" value="NM_009851.2"/>
</dbReference>
<dbReference type="PDB" id="2JCP">
    <property type="method" value="X-ray"/>
    <property type="resolution" value="1.30 A"/>
    <property type="chains" value="A=23-174"/>
</dbReference>
<dbReference type="PDB" id="2JCQ">
    <property type="method" value="X-ray"/>
    <property type="resolution" value="1.25 A"/>
    <property type="chains" value="A=23-174"/>
</dbReference>
<dbReference type="PDB" id="2JCR">
    <property type="method" value="X-ray"/>
    <property type="resolution" value="2.00 A"/>
    <property type="chains" value="A=23-174"/>
</dbReference>
<dbReference type="PDB" id="2ZPY">
    <property type="method" value="X-ray"/>
    <property type="resolution" value="2.10 A"/>
    <property type="chains" value="B=708-727"/>
</dbReference>
<dbReference type="PDB" id="4MRD">
    <property type="method" value="X-ray"/>
    <property type="resolution" value="2.55 A"/>
    <property type="chains" value="A=23-171"/>
</dbReference>
<dbReference type="PDB" id="4MRE">
    <property type="method" value="X-ray"/>
    <property type="resolution" value="1.58 A"/>
    <property type="chains" value="A=23-171"/>
</dbReference>
<dbReference type="PDB" id="4MRF">
    <property type="method" value="X-ray"/>
    <property type="resolution" value="1.55 A"/>
    <property type="chains" value="A=23-171"/>
</dbReference>
<dbReference type="PDB" id="4MRG">
    <property type="method" value="X-ray"/>
    <property type="resolution" value="1.69 A"/>
    <property type="chains" value="A=23-171"/>
</dbReference>
<dbReference type="PDB" id="4MRH">
    <property type="method" value="X-ray"/>
    <property type="resolution" value="1.12 A"/>
    <property type="chains" value="A=23-171"/>
</dbReference>
<dbReference type="PDB" id="4NP2">
    <property type="method" value="X-ray"/>
    <property type="resolution" value="1.75 A"/>
    <property type="chains" value="A=23-171"/>
</dbReference>
<dbReference type="PDB" id="4NP3">
    <property type="method" value="X-ray"/>
    <property type="resolution" value="1.61 A"/>
    <property type="chains" value="A=23-171"/>
</dbReference>
<dbReference type="PDB" id="5BZC">
    <property type="method" value="X-ray"/>
    <property type="resolution" value="1.95 A"/>
    <property type="chains" value="A=22-171"/>
</dbReference>
<dbReference type="PDB" id="5BZE">
    <property type="method" value="X-ray"/>
    <property type="resolution" value="1.31 A"/>
    <property type="chains" value="A=23-171"/>
</dbReference>
<dbReference type="PDB" id="5BZF">
    <property type="method" value="X-ray"/>
    <property type="resolution" value="2.77 A"/>
    <property type="chains" value="A=21-171"/>
</dbReference>
<dbReference type="PDB" id="5BZG">
    <property type="method" value="X-ray"/>
    <property type="resolution" value="2.19 A"/>
    <property type="chains" value="A=21-171"/>
</dbReference>
<dbReference type="PDB" id="5BZH">
    <property type="method" value="X-ray"/>
    <property type="resolution" value="1.95 A"/>
    <property type="chains" value="A=21-171"/>
</dbReference>
<dbReference type="PDB" id="5BZI">
    <property type="method" value="X-ray"/>
    <property type="resolution" value="1.32 A"/>
    <property type="chains" value="A=21-171"/>
</dbReference>
<dbReference type="PDB" id="5BZJ">
    <property type="method" value="X-ray"/>
    <property type="resolution" value="1.40 A"/>
    <property type="chains" value="A=21-171"/>
</dbReference>
<dbReference type="PDB" id="5BZK">
    <property type="method" value="X-ray"/>
    <property type="resolution" value="1.40 A"/>
    <property type="chains" value="A=21-171"/>
</dbReference>
<dbReference type="PDB" id="5BZL">
    <property type="method" value="X-ray"/>
    <property type="resolution" value="1.23 A"/>
    <property type="chains" value="A=21-171"/>
</dbReference>
<dbReference type="PDB" id="5BZM">
    <property type="method" value="X-ray"/>
    <property type="resolution" value="1.25 A"/>
    <property type="chains" value="A=21-171"/>
</dbReference>
<dbReference type="PDB" id="5BZN">
    <property type="method" value="X-ray"/>
    <property type="resolution" value="1.23 A"/>
    <property type="chains" value="A=21-171"/>
</dbReference>
<dbReference type="PDB" id="5BZO">
    <property type="method" value="X-ray"/>
    <property type="resolution" value="1.22 A"/>
    <property type="chains" value="A=21-171"/>
</dbReference>
<dbReference type="PDB" id="5BZP">
    <property type="method" value="X-ray"/>
    <property type="resolution" value="1.23 A"/>
    <property type="chains" value="A=21-171"/>
</dbReference>
<dbReference type="PDB" id="5BZQ">
    <property type="method" value="X-ray"/>
    <property type="resolution" value="1.20 A"/>
    <property type="chains" value="A=21-171"/>
</dbReference>
<dbReference type="PDB" id="5BZR">
    <property type="method" value="X-ray"/>
    <property type="resolution" value="1.15 A"/>
    <property type="chains" value="A=21-171"/>
</dbReference>
<dbReference type="PDB" id="5BZS">
    <property type="method" value="X-ray"/>
    <property type="resolution" value="1.50 A"/>
    <property type="chains" value="A=21-171"/>
</dbReference>
<dbReference type="PDB" id="5BZT">
    <property type="method" value="X-ray"/>
    <property type="resolution" value="1.25 A"/>
    <property type="chains" value="A=21-171"/>
</dbReference>
<dbReference type="PDB" id="5SBK">
    <property type="method" value="X-ray"/>
    <property type="resolution" value="1.23 A"/>
    <property type="chains" value="A=23-172"/>
</dbReference>
<dbReference type="PDB" id="5SBL">
    <property type="method" value="X-ray"/>
    <property type="resolution" value="1.20 A"/>
    <property type="chains" value="A=23-172"/>
</dbReference>
<dbReference type="PDB" id="5SBM">
    <property type="method" value="X-ray"/>
    <property type="resolution" value="1.14 A"/>
    <property type="chains" value="A=23-172"/>
</dbReference>
<dbReference type="PDB" id="5SBN">
    <property type="method" value="X-ray"/>
    <property type="resolution" value="1.18 A"/>
    <property type="chains" value="A=23-172"/>
</dbReference>
<dbReference type="PDB" id="5SBO">
    <property type="method" value="X-ray"/>
    <property type="resolution" value="1.27 A"/>
    <property type="chains" value="A=23-172"/>
</dbReference>
<dbReference type="PDB" id="5SBP">
    <property type="method" value="X-ray"/>
    <property type="resolution" value="1.27 A"/>
    <property type="chains" value="A=23-172"/>
</dbReference>
<dbReference type="PDB" id="5SBQ">
    <property type="method" value="X-ray"/>
    <property type="resolution" value="0.99 A"/>
    <property type="chains" value="A=23-172"/>
</dbReference>
<dbReference type="PDB" id="5SBR">
    <property type="method" value="X-ray"/>
    <property type="resolution" value="1.29 A"/>
    <property type="chains" value="A=23-172"/>
</dbReference>
<dbReference type="PDB" id="5SBS">
    <property type="method" value="X-ray"/>
    <property type="resolution" value="1.02 A"/>
    <property type="chains" value="A=23-172"/>
</dbReference>
<dbReference type="PDB" id="5SBT">
    <property type="method" value="X-ray"/>
    <property type="resolution" value="1.16 A"/>
    <property type="chains" value="A=23-172"/>
</dbReference>
<dbReference type="PDB" id="5SBU">
    <property type="method" value="X-ray"/>
    <property type="resolution" value="1.04 A"/>
    <property type="chains" value="A=23-172"/>
</dbReference>
<dbReference type="PDB" id="5SBV">
    <property type="method" value="X-ray"/>
    <property type="resolution" value="1.11 A"/>
    <property type="chains" value="A=23-172"/>
</dbReference>
<dbReference type="PDB" id="5SBW">
    <property type="method" value="X-ray"/>
    <property type="resolution" value="1.15 A"/>
    <property type="chains" value="A=23-172"/>
</dbReference>
<dbReference type="PDB" id="5SBX">
    <property type="method" value="X-ray"/>
    <property type="resolution" value="1.05 A"/>
    <property type="chains" value="A=23-172"/>
</dbReference>
<dbReference type="PDB" id="5SBY">
    <property type="method" value="X-ray"/>
    <property type="resolution" value="1.22 A"/>
    <property type="chains" value="A=23-172"/>
</dbReference>
<dbReference type="PDB" id="5SBZ">
    <property type="method" value="X-ray"/>
    <property type="resolution" value="1.17 A"/>
    <property type="chains" value="A=23-172"/>
</dbReference>
<dbReference type="PDB" id="5SC0">
    <property type="method" value="X-ray"/>
    <property type="resolution" value="1.19 A"/>
    <property type="chains" value="A=23-172"/>
</dbReference>
<dbReference type="PDB" id="5SC1">
    <property type="method" value="X-ray"/>
    <property type="resolution" value="1.17 A"/>
    <property type="chains" value="A=23-172"/>
</dbReference>
<dbReference type="PDB" id="5SC2">
    <property type="method" value="X-ray"/>
    <property type="resolution" value="1.21 A"/>
    <property type="chains" value="A=23-172"/>
</dbReference>
<dbReference type="PDB" id="5SC3">
    <property type="method" value="X-ray"/>
    <property type="resolution" value="1.24 A"/>
    <property type="chains" value="A=23-172"/>
</dbReference>
<dbReference type="PDB" id="5SC4">
    <property type="method" value="X-ray"/>
    <property type="resolution" value="1.17 A"/>
    <property type="chains" value="A=23-172"/>
</dbReference>
<dbReference type="PDB" id="5SC5">
    <property type="method" value="X-ray"/>
    <property type="resolution" value="1.17 A"/>
    <property type="chains" value="A=23-172"/>
</dbReference>
<dbReference type="PDB" id="5SC6">
    <property type="method" value="X-ray"/>
    <property type="resolution" value="1.33 A"/>
    <property type="chains" value="A=23-172"/>
</dbReference>
<dbReference type="PDB" id="5SC7">
    <property type="method" value="X-ray"/>
    <property type="resolution" value="1.20 A"/>
    <property type="chains" value="A=23-172"/>
</dbReference>
<dbReference type="PDBsum" id="2JCP"/>
<dbReference type="PDBsum" id="2JCQ"/>
<dbReference type="PDBsum" id="2JCR"/>
<dbReference type="PDBsum" id="2ZPY"/>
<dbReference type="PDBsum" id="4MRD"/>
<dbReference type="PDBsum" id="4MRE"/>
<dbReference type="PDBsum" id="4MRF"/>
<dbReference type="PDBsum" id="4MRG"/>
<dbReference type="PDBsum" id="4MRH"/>
<dbReference type="PDBsum" id="4NP2"/>
<dbReference type="PDBsum" id="4NP3"/>
<dbReference type="PDBsum" id="5BZC"/>
<dbReference type="PDBsum" id="5BZE"/>
<dbReference type="PDBsum" id="5BZF"/>
<dbReference type="PDBsum" id="5BZG"/>
<dbReference type="PDBsum" id="5BZH"/>
<dbReference type="PDBsum" id="5BZI"/>
<dbReference type="PDBsum" id="5BZJ"/>
<dbReference type="PDBsum" id="5BZK"/>
<dbReference type="PDBsum" id="5BZL"/>
<dbReference type="PDBsum" id="5BZM"/>
<dbReference type="PDBsum" id="5BZN"/>
<dbReference type="PDBsum" id="5BZO"/>
<dbReference type="PDBsum" id="5BZP"/>
<dbReference type="PDBsum" id="5BZQ"/>
<dbReference type="PDBsum" id="5BZR"/>
<dbReference type="PDBsum" id="5BZS"/>
<dbReference type="PDBsum" id="5BZT"/>
<dbReference type="PDBsum" id="5SBK"/>
<dbReference type="PDBsum" id="5SBL"/>
<dbReference type="PDBsum" id="5SBM"/>
<dbReference type="PDBsum" id="5SBN"/>
<dbReference type="PDBsum" id="5SBO"/>
<dbReference type="PDBsum" id="5SBP"/>
<dbReference type="PDBsum" id="5SBQ"/>
<dbReference type="PDBsum" id="5SBR"/>
<dbReference type="PDBsum" id="5SBS"/>
<dbReference type="PDBsum" id="5SBT"/>
<dbReference type="PDBsum" id="5SBU"/>
<dbReference type="PDBsum" id="5SBV"/>
<dbReference type="PDBsum" id="5SBW"/>
<dbReference type="PDBsum" id="5SBX"/>
<dbReference type="PDBsum" id="5SBY"/>
<dbReference type="PDBsum" id="5SBZ"/>
<dbReference type="PDBsum" id="5SC0"/>
<dbReference type="PDBsum" id="5SC1"/>
<dbReference type="PDBsum" id="5SC2"/>
<dbReference type="PDBsum" id="5SC3"/>
<dbReference type="PDBsum" id="5SC4"/>
<dbReference type="PDBsum" id="5SC5"/>
<dbReference type="PDBsum" id="5SC6"/>
<dbReference type="PDBsum" id="5SC7"/>
<dbReference type="SMR" id="P15379"/>
<dbReference type="BioGRID" id="198600">
    <property type="interactions" value="5"/>
</dbReference>
<dbReference type="CORUM" id="P15379"/>
<dbReference type="DIP" id="DIP-29095N"/>
<dbReference type="FunCoup" id="P15379">
    <property type="interactions" value="393"/>
</dbReference>
<dbReference type="IntAct" id="P15379">
    <property type="interactions" value="14"/>
</dbReference>
<dbReference type="MINT" id="P15379"/>
<dbReference type="STRING" id="10090.ENSMUSP00000005218"/>
<dbReference type="BindingDB" id="P15379"/>
<dbReference type="ChEMBL" id="CHEMBL3232693"/>
<dbReference type="GlyCosmos" id="P15379">
    <property type="glycosylation" value="10 sites, No reported glycans"/>
</dbReference>
<dbReference type="GlyGen" id="P15379">
    <property type="glycosylation" value="14 sites, 1 N-linked glycan (1 site), 1 O-linked glycan (1 site)"/>
</dbReference>
<dbReference type="iPTMnet" id="P15379"/>
<dbReference type="PhosphoSitePlus" id="P15379"/>
<dbReference type="SwissPalm" id="P15379"/>
<dbReference type="jPOST" id="P15379"/>
<dbReference type="PaxDb" id="10090-ENSMUSP00000005218"/>
<dbReference type="PeptideAtlas" id="P15379"/>
<dbReference type="ProteomicsDB" id="279969">
    <molecule id="P15379-14"/>
</dbReference>
<dbReference type="ProteomicsDB" id="279970">
    <molecule id="P15379-7"/>
</dbReference>
<dbReference type="ProteomicsDB" id="279971">
    <molecule id="P15379-8"/>
</dbReference>
<dbReference type="ProteomicsDB" id="279972">
    <molecule id="P15379-4"/>
</dbReference>
<dbReference type="ProteomicsDB" id="279973">
    <molecule id="P15379-9"/>
</dbReference>
<dbReference type="ProteomicsDB" id="279974">
    <molecule id="P15379-5"/>
</dbReference>
<dbReference type="ProteomicsDB" id="279975">
    <molecule id="P15379-6"/>
</dbReference>
<dbReference type="ProteomicsDB" id="279976">
    <molecule id="P15379-10"/>
</dbReference>
<dbReference type="ProteomicsDB" id="279977">
    <molecule id="P15379-11"/>
</dbReference>
<dbReference type="ProteomicsDB" id="279978">
    <molecule id="P15379-12"/>
</dbReference>
<dbReference type="ProteomicsDB" id="279979">
    <molecule id="P15379-13"/>
</dbReference>
<dbReference type="ProteomicsDB" id="279980">
    <molecule id="P15379-3"/>
</dbReference>
<dbReference type="ProteomicsDB" id="279981">
    <molecule id="P15379-2"/>
</dbReference>
<dbReference type="Pumba" id="P15379"/>
<dbReference type="DNASU" id="12505"/>
<dbReference type="GeneID" id="12505"/>
<dbReference type="KEGG" id="mmu:12505"/>
<dbReference type="AGR" id="MGI:88338"/>
<dbReference type="CTD" id="960"/>
<dbReference type="MGI" id="MGI:88338">
    <property type="gene designation" value="Cd44"/>
</dbReference>
<dbReference type="eggNOG" id="ENOG502RX7Q">
    <property type="taxonomic scope" value="Eukaryota"/>
</dbReference>
<dbReference type="InParanoid" id="P15379"/>
<dbReference type="OrthoDB" id="9938473at2759"/>
<dbReference type="Reactome" id="R-MMU-1474228">
    <property type="pathway name" value="Degradation of the extracellular matrix"/>
</dbReference>
<dbReference type="Reactome" id="R-MMU-202733">
    <property type="pathway name" value="Cell surface interactions at the vascular wall"/>
</dbReference>
<dbReference type="Reactome" id="R-MMU-216083">
    <property type="pathway name" value="Integrin cell surface interactions"/>
</dbReference>
<dbReference type="Reactome" id="R-MMU-2160916">
    <property type="pathway name" value="Hyaluronan uptake and degradation"/>
</dbReference>
<dbReference type="Reactome" id="R-MMU-6798695">
    <property type="pathway name" value="Neutrophil degranulation"/>
</dbReference>
<dbReference type="BioGRID-ORCS" id="12505">
    <property type="hits" value="1 hit in 81 CRISPR screens"/>
</dbReference>
<dbReference type="ChiTaRS" id="Cd44">
    <property type="organism name" value="mouse"/>
</dbReference>
<dbReference type="EvolutionaryTrace" id="P15379"/>
<dbReference type="PRO" id="PR:P15379"/>
<dbReference type="Proteomes" id="UP000000589">
    <property type="component" value="Unplaced"/>
</dbReference>
<dbReference type="RNAct" id="P15379">
    <property type="molecule type" value="protein"/>
</dbReference>
<dbReference type="GO" id="GO:0016324">
    <property type="term" value="C:apical plasma membrane"/>
    <property type="evidence" value="ECO:0000250"/>
    <property type="project" value="UniProtKB"/>
</dbReference>
<dbReference type="GO" id="GO:0016323">
    <property type="term" value="C:basolateral plasma membrane"/>
    <property type="evidence" value="ECO:0000314"/>
    <property type="project" value="MGI"/>
</dbReference>
<dbReference type="GO" id="GO:0042995">
    <property type="term" value="C:cell projection"/>
    <property type="evidence" value="ECO:0000250"/>
    <property type="project" value="UniProtKB"/>
</dbReference>
<dbReference type="GO" id="GO:0009986">
    <property type="term" value="C:cell surface"/>
    <property type="evidence" value="ECO:0000314"/>
    <property type="project" value="MGI"/>
</dbReference>
<dbReference type="GO" id="GO:0009897">
    <property type="term" value="C:external side of plasma membrane"/>
    <property type="evidence" value="ECO:0000314"/>
    <property type="project" value="MGI"/>
</dbReference>
<dbReference type="GO" id="GO:0005576">
    <property type="term" value="C:extracellular region"/>
    <property type="evidence" value="ECO:0007669"/>
    <property type="project" value="UniProtKB-SubCell"/>
</dbReference>
<dbReference type="GO" id="GO:0031258">
    <property type="term" value="C:lamellipodium membrane"/>
    <property type="evidence" value="ECO:0000250"/>
    <property type="project" value="UniProtKB"/>
</dbReference>
<dbReference type="GO" id="GO:0035692">
    <property type="term" value="C:macrophage migration inhibitory factor receptor complex"/>
    <property type="evidence" value="ECO:0000314"/>
    <property type="project" value="BHF-UCL"/>
</dbReference>
<dbReference type="GO" id="GO:0045121">
    <property type="term" value="C:membrane raft"/>
    <property type="evidence" value="ECO:0000266"/>
    <property type="project" value="MGI"/>
</dbReference>
<dbReference type="GO" id="GO:0005902">
    <property type="term" value="C:microvillus"/>
    <property type="evidence" value="ECO:0000314"/>
    <property type="project" value="UniProtKB"/>
</dbReference>
<dbReference type="GO" id="GO:0005886">
    <property type="term" value="C:plasma membrane"/>
    <property type="evidence" value="ECO:0000314"/>
    <property type="project" value="MGI"/>
</dbReference>
<dbReference type="GO" id="GO:0038024">
    <property type="term" value="F:cargo receptor activity"/>
    <property type="evidence" value="ECO:0000314"/>
    <property type="project" value="MGI"/>
</dbReference>
<dbReference type="GO" id="GO:0016247">
    <property type="term" value="F:channel regulator activity"/>
    <property type="evidence" value="ECO:0000266"/>
    <property type="project" value="MGI"/>
</dbReference>
<dbReference type="GO" id="GO:0005540">
    <property type="term" value="F:hyaluronic acid binding"/>
    <property type="evidence" value="ECO:0000314"/>
    <property type="project" value="MGI"/>
</dbReference>
<dbReference type="GO" id="GO:0005114">
    <property type="term" value="F:type II transforming growth factor beta receptor binding"/>
    <property type="evidence" value="ECO:0000353"/>
    <property type="project" value="UniProtKB"/>
</dbReference>
<dbReference type="GO" id="GO:0060442">
    <property type="term" value="P:branching involved in prostate gland morphogenesis"/>
    <property type="evidence" value="ECO:0000315"/>
    <property type="project" value="MGI"/>
</dbReference>
<dbReference type="GO" id="GO:0001658">
    <property type="term" value="P:branching involved in ureteric bud morphogenesis"/>
    <property type="evidence" value="ECO:0000315"/>
    <property type="project" value="MGI"/>
</dbReference>
<dbReference type="GO" id="GO:0007155">
    <property type="term" value="P:cell adhesion"/>
    <property type="evidence" value="ECO:0000314"/>
    <property type="project" value="MGI"/>
</dbReference>
<dbReference type="GO" id="GO:0019221">
    <property type="term" value="P:cytokine-mediated signaling pathway"/>
    <property type="evidence" value="ECO:0007669"/>
    <property type="project" value="GOC"/>
</dbReference>
<dbReference type="GO" id="GO:0030214">
    <property type="term" value="P:hyaluronan catabolic process"/>
    <property type="evidence" value="ECO:0000314"/>
    <property type="project" value="MGI"/>
</dbReference>
<dbReference type="GO" id="GO:2000562">
    <property type="term" value="P:negative regulation of CD4-positive, alpha-beta T cell proliferation"/>
    <property type="evidence" value="ECO:0000315"/>
    <property type="project" value="UniProtKB"/>
</dbReference>
<dbReference type="GO" id="GO:0043518">
    <property type="term" value="P:negative regulation of DNA damage response, signal transduction by p53 class mediator"/>
    <property type="evidence" value="ECO:0000315"/>
    <property type="project" value="BHF-UCL"/>
</dbReference>
<dbReference type="GO" id="GO:0050728">
    <property type="term" value="P:negative regulation of inflammatory response"/>
    <property type="evidence" value="ECO:0000315"/>
    <property type="project" value="UniProtKB"/>
</dbReference>
<dbReference type="GO" id="GO:1902166">
    <property type="term" value="P:negative regulation of intrinsic apoptotic signaling pathway in response to DNA damage by p53 class mediator"/>
    <property type="evidence" value="ECO:0000315"/>
    <property type="project" value="BHF-UCL"/>
</dbReference>
<dbReference type="GO" id="GO:0002906">
    <property type="term" value="P:negative regulation of mature B cell apoptotic process"/>
    <property type="evidence" value="ECO:0000314"/>
    <property type="project" value="BHF-UCL"/>
</dbReference>
<dbReference type="GO" id="GO:0045590">
    <property type="term" value="P:negative regulation of regulatory T cell differentiation"/>
    <property type="evidence" value="ECO:0000315"/>
    <property type="project" value="UniProtKB"/>
</dbReference>
<dbReference type="GO" id="GO:0002821">
    <property type="term" value="P:positive regulation of adaptive immune response"/>
    <property type="evidence" value="ECO:0000303"/>
    <property type="project" value="BHF-UCL"/>
</dbReference>
<dbReference type="GO" id="GO:0070374">
    <property type="term" value="P:positive regulation of ERK1 and ERK2 cascade"/>
    <property type="evidence" value="ECO:0000315"/>
    <property type="project" value="BHF-UCL"/>
</dbReference>
<dbReference type="GO" id="GO:0010628">
    <property type="term" value="P:positive regulation of gene expression"/>
    <property type="evidence" value="ECO:0000316"/>
    <property type="project" value="MGI"/>
</dbReference>
<dbReference type="GO" id="GO:0006898">
    <property type="term" value="P:receptor-mediated endocytosis"/>
    <property type="evidence" value="ECO:0000314"/>
    <property type="project" value="MGI"/>
</dbReference>
<dbReference type="GO" id="GO:2000392">
    <property type="term" value="P:regulation of lamellipodium morphogenesis"/>
    <property type="evidence" value="ECO:0000250"/>
    <property type="project" value="UniProtKB"/>
</dbReference>
<dbReference type="GO" id="GO:0016055">
    <property type="term" value="P:Wnt signaling pathway"/>
    <property type="evidence" value="ECO:0000314"/>
    <property type="project" value="MGI"/>
</dbReference>
<dbReference type="GO" id="GO:0002246">
    <property type="term" value="P:wound healing involved in inflammatory response"/>
    <property type="evidence" value="ECO:0000315"/>
    <property type="project" value="MGI"/>
</dbReference>
<dbReference type="GO" id="GO:0044319">
    <property type="term" value="P:wound healing, spreading of cells"/>
    <property type="evidence" value="ECO:0000250"/>
    <property type="project" value="UniProtKB"/>
</dbReference>
<dbReference type="CDD" id="cd03516">
    <property type="entry name" value="Link_domain_CD44_like"/>
    <property type="match status" value="1"/>
</dbReference>
<dbReference type="FunFam" id="3.10.100.10:FF:000004">
    <property type="entry name" value="CD44 antigen isoform X2"/>
    <property type="match status" value="1"/>
</dbReference>
<dbReference type="Gene3D" id="3.10.100.10">
    <property type="entry name" value="Mannose-Binding Protein A, subunit A"/>
    <property type="match status" value="1"/>
</dbReference>
<dbReference type="IDEAL" id="IID50199"/>
<dbReference type="InterPro" id="IPR016186">
    <property type="entry name" value="C-type_lectin-like/link_sf"/>
</dbReference>
<dbReference type="InterPro" id="IPR001231">
    <property type="entry name" value="CD44_antigen"/>
</dbReference>
<dbReference type="InterPro" id="IPR043210">
    <property type="entry name" value="CD44_antigen-like"/>
</dbReference>
<dbReference type="InterPro" id="IPR016187">
    <property type="entry name" value="CTDL_fold"/>
</dbReference>
<dbReference type="InterPro" id="IPR000538">
    <property type="entry name" value="Link_dom"/>
</dbReference>
<dbReference type="PANTHER" id="PTHR10225:SF6">
    <property type="entry name" value="CD44 ANTIGEN"/>
    <property type="match status" value="1"/>
</dbReference>
<dbReference type="PANTHER" id="PTHR10225">
    <property type="entry name" value="HYALURONAN RECEPTOR"/>
    <property type="match status" value="1"/>
</dbReference>
<dbReference type="Pfam" id="PF00193">
    <property type="entry name" value="Xlink"/>
    <property type="match status" value="1"/>
</dbReference>
<dbReference type="PRINTS" id="PR00658">
    <property type="entry name" value="CD44"/>
</dbReference>
<dbReference type="PRINTS" id="PR01265">
    <property type="entry name" value="LINKMODULE"/>
</dbReference>
<dbReference type="SMART" id="SM00445">
    <property type="entry name" value="LINK"/>
    <property type="match status" value="1"/>
</dbReference>
<dbReference type="SUPFAM" id="SSF56436">
    <property type="entry name" value="C-type lectin-like"/>
    <property type="match status" value="1"/>
</dbReference>
<dbReference type="PROSITE" id="PS01241">
    <property type="entry name" value="LINK_1"/>
    <property type="match status" value="1"/>
</dbReference>
<dbReference type="PROSITE" id="PS50963">
    <property type="entry name" value="LINK_2"/>
    <property type="match status" value="1"/>
</dbReference>
<reference key="1">
    <citation type="journal article" date="1992" name="J. Cell Biol.">
        <title>Molecular isoforms of murine CD44 and evidence that the membrane proximal domain is not critical for hyaluronate recognition.</title>
        <authorList>
            <person name="He Q."/>
            <person name="Lesley J."/>
            <person name="Hyman R."/>
            <person name="Ishihara K."/>
            <person name="Kincade P.W."/>
        </authorList>
    </citation>
    <scope>NUCLEOTIDE SEQUENCE [MRNA] (ISOFORMS 4; 6; 7 AND 12)</scope>
    <source>
        <strain>DBA/2J</strain>
        <tissue>Lung</tissue>
    </source>
</reference>
<reference key="2">
    <citation type="journal article" date="1989" name="J. Immunol.">
        <title>Molecular cloning and expression of Pgp-1. The mouse homolog of the human H-CAM (Hermes) lymphocyte homing receptor.</title>
        <authorList>
            <person name="Zhou D.F.H."/>
            <person name="Ding J.F."/>
            <person name="Picker L.J."/>
            <person name="Bargatze R.F."/>
            <person name="Butcher E.C."/>
            <person name="Goeddel D.V."/>
        </authorList>
    </citation>
    <scope>NUCLEOTIDE SEQUENCE [MRNA] (ISOFORM 13)</scope>
    <scope>POLYMORPHISM</scope>
</reference>
<reference key="3">
    <citation type="journal article" date="1989" name="Proc. Natl. Acad. Sci. U.S.A.">
        <title>Isolation of mouse CD44 cDNA: structural features are distinct from the primate cDNA.</title>
        <authorList>
            <person name="Nottenburg C."/>
            <person name="Rees G."/>
            <person name="St John T."/>
        </authorList>
    </citation>
    <scope>NUCLEOTIDE SEQUENCE [MRNA] (ISOFORM 13)</scope>
</reference>
<reference key="4">
    <citation type="journal article" date="2000" name="J. Exp. Med.">
        <title>Abrogation of experimental colitis correlates with increased apoptosis in mice deficient for CD44 variant exon 7 (CD44v7).</title>
        <authorList>
            <person name="Wittig B.M."/>
            <person name="Johansson B."/>
            <person name="Zoeller M."/>
            <person name="Schwaerzler C."/>
            <person name="Guenthert U."/>
        </authorList>
    </citation>
    <scope>NUCLEOTIDE SEQUENCE [MRNA] (ISOFORM 1)</scope>
</reference>
<reference key="5">
    <citation type="journal article" date="2004" name="Genome Res.">
        <title>The status, quality, and expansion of the NIH full-length cDNA project: the Mammalian Gene Collection (MGC).</title>
        <authorList>
            <consortium name="The MGC Project Team"/>
        </authorList>
    </citation>
    <scope>NUCLEOTIDE SEQUENCE [LARGE SCALE MRNA] (ISOFORM 13)</scope>
</reference>
<reference key="6">
    <citation type="journal article" date="2005" name="Science">
        <title>The transcriptional landscape of the mammalian genome.</title>
        <authorList>
            <person name="Carninci P."/>
            <person name="Kasukawa T."/>
            <person name="Katayama S."/>
            <person name="Gough J."/>
            <person name="Frith M.C."/>
            <person name="Maeda N."/>
            <person name="Oyama R."/>
            <person name="Ravasi T."/>
            <person name="Lenhard B."/>
            <person name="Wells C."/>
            <person name="Kodzius R."/>
            <person name="Shimokawa K."/>
            <person name="Bajic V.B."/>
            <person name="Brenner S.E."/>
            <person name="Batalov S."/>
            <person name="Forrest A.R."/>
            <person name="Zavolan M."/>
            <person name="Davis M.J."/>
            <person name="Wilming L.G."/>
            <person name="Aidinis V."/>
            <person name="Allen J.E."/>
            <person name="Ambesi-Impiombato A."/>
            <person name="Apweiler R."/>
            <person name="Aturaliya R.N."/>
            <person name="Bailey T.L."/>
            <person name="Bansal M."/>
            <person name="Baxter L."/>
            <person name="Beisel K.W."/>
            <person name="Bersano T."/>
            <person name="Bono H."/>
            <person name="Chalk A.M."/>
            <person name="Chiu K.P."/>
            <person name="Choudhary V."/>
            <person name="Christoffels A."/>
            <person name="Clutterbuck D.R."/>
            <person name="Crowe M.L."/>
            <person name="Dalla E."/>
            <person name="Dalrymple B.P."/>
            <person name="de Bono B."/>
            <person name="Della Gatta G."/>
            <person name="di Bernardo D."/>
            <person name="Down T."/>
            <person name="Engstrom P."/>
            <person name="Fagiolini M."/>
            <person name="Faulkner G."/>
            <person name="Fletcher C.F."/>
            <person name="Fukushima T."/>
            <person name="Furuno M."/>
            <person name="Futaki S."/>
            <person name="Gariboldi M."/>
            <person name="Georgii-Hemming P."/>
            <person name="Gingeras T.R."/>
            <person name="Gojobori T."/>
            <person name="Green R.E."/>
            <person name="Gustincich S."/>
            <person name="Harbers M."/>
            <person name="Hayashi Y."/>
            <person name="Hensch T.K."/>
            <person name="Hirokawa N."/>
            <person name="Hill D."/>
            <person name="Huminiecki L."/>
            <person name="Iacono M."/>
            <person name="Ikeo K."/>
            <person name="Iwama A."/>
            <person name="Ishikawa T."/>
            <person name="Jakt M."/>
            <person name="Kanapin A."/>
            <person name="Katoh M."/>
            <person name="Kawasawa Y."/>
            <person name="Kelso J."/>
            <person name="Kitamura H."/>
            <person name="Kitano H."/>
            <person name="Kollias G."/>
            <person name="Krishnan S.P."/>
            <person name="Kruger A."/>
            <person name="Kummerfeld S.K."/>
            <person name="Kurochkin I.V."/>
            <person name="Lareau L.F."/>
            <person name="Lazarevic D."/>
            <person name="Lipovich L."/>
            <person name="Liu J."/>
            <person name="Liuni S."/>
            <person name="McWilliam S."/>
            <person name="Madan Babu M."/>
            <person name="Madera M."/>
            <person name="Marchionni L."/>
            <person name="Matsuda H."/>
            <person name="Matsuzawa S."/>
            <person name="Miki H."/>
            <person name="Mignone F."/>
            <person name="Miyake S."/>
            <person name="Morris K."/>
            <person name="Mottagui-Tabar S."/>
            <person name="Mulder N."/>
            <person name="Nakano N."/>
            <person name="Nakauchi H."/>
            <person name="Ng P."/>
            <person name="Nilsson R."/>
            <person name="Nishiguchi S."/>
            <person name="Nishikawa S."/>
            <person name="Nori F."/>
            <person name="Ohara O."/>
            <person name="Okazaki Y."/>
            <person name="Orlando V."/>
            <person name="Pang K.C."/>
            <person name="Pavan W.J."/>
            <person name="Pavesi G."/>
            <person name="Pesole G."/>
            <person name="Petrovsky N."/>
            <person name="Piazza S."/>
            <person name="Reed J."/>
            <person name="Reid J.F."/>
            <person name="Ring B.Z."/>
            <person name="Ringwald M."/>
            <person name="Rost B."/>
            <person name="Ruan Y."/>
            <person name="Salzberg S.L."/>
            <person name="Sandelin A."/>
            <person name="Schneider C."/>
            <person name="Schoenbach C."/>
            <person name="Sekiguchi K."/>
            <person name="Semple C.A."/>
            <person name="Seno S."/>
            <person name="Sessa L."/>
            <person name="Sheng Y."/>
            <person name="Shibata Y."/>
            <person name="Shimada H."/>
            <person name="Shimada K."/>
            <person name="Silva D."/>
            <person name="Sinclair B."/>
            <person name="Sperling S."/>
            <person name="Stupka E."/>
            <person name="Sugiura K."/>
            <person name="Sultana R."/>
            <person name="Takenaka Y."/>
            <person name="Taki K."/>
            <person name="Tammoja K."/>
            <person name="Tan S.L."/>
            <person name="Tang S."/>
            <person name="Taylor M.S."/>
            <person name="Tegner J."/>
            <person name="Teichmann S.A."/>
            <person name="Ueda H.R."/>
            <person name="van Nimwegen E."/>
            <person name="Verardo R."/>
            <person name="Wei C.L."/>
            <person name="Yagi K."/>
            <person name="Yamanishi H."/>
            <person name="Zabarovsky E."/>
            <person name="Zhu S."/>
            <person name="Zimmer A."/>
            <person name="Hide W."/>
            <person name="Bult C."/>
            <person name="Grimmond S.M."/>
            <person name="Teasdale R.D."/>
            <person name="Liu E.T."/>
            <person name="Brusic V."/>
            <person name="Quackenbush J."/>
            <person name="Wahlestedt C."/>
            <person name="Mattick J.S."/>
            <person name="Hume D.A."/>
            <person name="Kai C."/>
            <person name="Sasaki D."/>
            <person name="Tomaru Y."/>
            <person name="Fukuda S."/>
            <person name="Kanamori-Katayama M."/>
            <person name="Suzuki M."/>
            <person name="Aoki J."/>
            <person name="Arakawa T."/>
            <person name="Iida J."/>
            <person name="Imamura K."/>
            <person name="Itoh M."/>
            <person name="Kato T."/>
            <person name="Kawaji H."/>
            <person name="Kawagashira N."/>
            <person name="Kawashima T."/>
            <person name="Kojima M."/>
            <person name="Kondo S."/>
            <person name="Konno H."/>
            <person name="Nakano K."/>
            <person name="Ninomiya N."/>
            <person name="Nishio T."/>
            <person name="Okada M."/>
            <person name="Plessy C."/>
            <person name="Shibata K."/>
            <person name="Shiraki T."/>
            <person name="Suzuki S."/>
            <person name="Tagami M."/>
            <person name="Waki K."/>
            <person name="Watahiki A."/>
            <person name="Okamura-Oho Y."/>
            <person name="Suzuki H."/>
            <person name="Kawai J."/>
            <person name="Hayashizaki Y."/>
        </authorList>
    </citation>
    <scope>NUCLEOTIDE SEQUENCE [LARGE SCALE MRNA] (ISOFORM 13)</scope>
    <source>
        <strain>C57BL/6J</strain>
        <tissue>Embryo</tissue>
    </source>
</reference>
<reference key="7">
    <citation type="journal article" date="1990" name="J. Biol. Chem.">
        <title>The cDNA sequence of mouse Pgp-1 and homology to human CD44 cell surface antigen and proteoglycan core/link proteins.</title>
        <authorList>
            <person name="Wolffe E.J."/>
            <person name="Gause W.C."/>
            <person name="Pelfrey C.M."/>
            <person name="Holland S.M."/>
            <person name="Steinberg A.D."/>
            <person name="August J.T."/>
        </authorList>
    </citation>
    <scope>NUCLEOTIDE SEQUENCE [MRNA] OF 8-778 (ISOFORM 13)</scope>
</reference>
<reference key="8">
    <citation type="journal article" date="1993" name="Nucleic Acids Res.">
        <title>Splicing choice from ten variant exons establishes CD44 variability.</title>
        <authorList>
            <person name="Toelg C."/>
            <person name="Hofmann M."/>
            <person name="Herrlich P."/>
            <person name="Ponta H."/>
        </authorList>
    </citation>
    <scope>NUCLEOTIDE SEQUENCE [MRNA] OF 224-637 (ISOFORMS 1; 2; 3; 4; 5; 6; 7 AND 8)</scope>
    <source>
        <strain>GR</strain>
    </source>
</reference>
<reference key="9">
    <citation type="journal article" date="1993" name="J. Biol. Chem.">
        <title>The identification of a new alternative exon with highly restricted tissue expression in transcripts encoding the mouse Pgp-1 (CD44) homing receptor. Comparison of all 10 variable exons between mouse, human, and rat.</title>
        <authorList>
            <person name="Screaton G.R."/>
            <person name="Bell M.V."/>
            <person name="Bell J.I."/>
            <person name="Jackson D.G."/>
        </authorList>
    </citation>
    <scope>NUCLEOTIDE SEQUENCE [MRNA] OF 224-637 (ISOFORM 9)</scope>
    <source>
        <strain>BALB/cJ</strain>
    </source>
</reference>
<reference key="10">
    <citation type="journal article" date="1996" name="J. Biol. Chem.">
        <title>A new alternatively spliced exon between v9 and v10 provides a molecular basis for synthesis of soluble CD44.</title>
        <authorList>
            <person name="Yu Q."/>
            <person name="Toole B.P."/>
        </authorList>
    </citation>
    <scope>PARTIAL NUCLEOTIDE SEQUENCE [GENOMIC DNA / MRNA] (ISOFORMS 10 AND 11)</scope>
    <source>
        <strain>Swiss Webster</strain>
    </source>
</reference>
<reference key="11">
    <citation type="journal article" date="1993" name="Cell">
        <title>The chondroitin sulfate form of invariant chain can enhance stimulation of T cell responses through interaction with CD44.</title>
        <authorList>
            <person name="Naujokas M.F."/>
            <person name="Morin M."/>
            <person name="Anderson M.S."/>
            <person name="Peterson M."/>
            <person name="Miller J."/>
        </authorList>
    </citation>
    <scope>FUNCTION</scope>
    <scope>INTERACTION WITH CD74</scope>
</reference>
<reference key="12">
    <citation type="journal article" date="1998" name="J. Cell Biol.">
        <title>Ezrin/radixin/moesin (ERM) proteins bind to a positively charged amino acid cluster in the juxta-membrane cytoplasmic domain of CD44, CD43, and ICAM-2.</title>
        <authorList>
            <person name="Yonemura S."/>
            <person name="Hirao M."/>
            <person name="Doi Y."/>
            <person name="Takahashi N."/>
            <person name="Kondo T."/>
            <person name="Tsukita S."/>
            <person name="Tsukita S."/>
        </authorList>
    </citation>
    <scope>INTERACTION WITH EZR; MSN AND RDX</scope>
    <scope>SUBCELLULAR LOCATION</scope>
    <scope>MUTAGENESIS OF 715-LYS--LYS-717</scope>
</reference>
<reference key="13">
    <citation type="journal article" date="2007" name="J. Neurochem.">
        <title>Hyaluronan-CD44 interaction stimulates Rac1 signaling and PKN gamma kinase activation leading to cytoskeleton function and cell migration in astrocytes.</title>
        <authorList>
            <person name="Bourguignon L.Y."/>
            <person name="Gilad E."/>
            <person name="Peyrollier K."/>
            <person name="Brightman A."/>
            <person name="Swanson R.A."/>
        </authorList>
    </citation>
    <scope>INTERACTION WITH PKN2</scope>
    <scope>SUBCELLULAR LOCATION</scope>
</reference>
<reference key="14">
    <citation type="journal article" date="2009" name="Immunity">
        <title>The phagosomal proteome in interferon-gamma-activated macrophages.</title>
        <authorList>
            <person name="Trost M."/>
            <person name="English L."/>
            <person name="Lemieux S."/>
            <person name="Courcelles M."/>
            <person name="Desjardins M."/>
            <person name="Thibault P."/>
        </authorList>
    </citation>
    <scope>PHOSPHORYLATION [LARGE SCALE ANALYSIS] AT THR-726; SER-733 AND SER-742</scope>
    <scope>IDENTIFICATION BY MASS SPECTROMETRY [LARGE SCALE ANALYSIS]</scope>
</reference>
<reference key="15">
    <citation type="journal article" date="2010" name="Cell">
        <title>A tissue-specific atlas of mouse protein phosphorylation and expression.</title>
        <authorList>
            <person name="Huttlin E.L."/>
            <person name="Jedrychowski M.P."/>
            <person name="Elias J.E."/>
            <person name="Goswami T."/>
            <person name="Rad R."/>
            <person name="Beausoleil S.A."/>
            <person name="Villen J."/>
            <person name="Haas W."/>
            <person name="Sowa M.E."/>
            <person name="Gygi S.P."/>
        </authorList>
    </citation>
    <scope>PHOSPHORYLATION [LARGE SCALE ANALYSIS] AT THR-726 AND SER-742</scope>
    <scope>IDENTIFICATION BY MASS SPECTROMETRY [LARGE SCALE ANALYSIS]</scope>
    <source>
        <tissue>Brain</tissue>
        <tissue>Lung</tissue>
        <tissue>Spleen</tissue>
    </source>
</reference>
<reference key="16">
    <citation type="journal article" date="2010" name="EMBO J.">
        <title>The PHCCEx domain of Tiam1/2 is a novel protein- and membrane-binding module.</title>
        <authorList>
            <person name="Terawaki S."/>
            <person name="Kitano K."/>
            <person name="Mori T."/>
            <person name="Zhai Y."/>
            <person name="Higuchi Y."/>
            <person name="Itoh N."/>
            <person name="Watanabe T."/>
            <person name="Kaibuchi K."/>
            <person name="Hakoshima T."/>
        </authorList>
    </citation>
    <scope>INTERACTION WITH TIAM1 AND TIAM2</scope>
</reference>
<reference key="17">
    <citation type="journal article" date="2012" name="EMBO J.">
        <title>Nuclear receptor binding protein 1 regulates intestinal progenitor cell homeostasis and tumour formation.</title>
        <authorList>
            <person name="Wilson C.H."/>
            <person name="Crombie C."/>
            <person name="van der Weyden L."/>
            <person name="Poulogiannis G."/>
            <person name="Rust A.G."/>
            <person name="Pardo M."/>
            <person name="Gracia T."/>
            <person name="Yu L."/>
            <person name="Choudhary J."/>
            <person name="Poulin G.B."/>
            <person name="McIntyre R.E."/>
            <person name="Winton D.J."/>
            <person name="March H.N."/>
            <person name="Arends M.J."/>
            <person name="Fraser A.G."/>
            <person name="Adams D.J."/>
        </authorList>
    </citation>
    <scope>TISSUE SPECIFICITY</scope>
</reference>
<reference key="18">
    <citation type="journal article" date="2014" name="Immunity">
        <title>Galectin-9-CD44 interaction enhances stability and function of adaptive regulatory T cells.</title>
        <authorList>
            <person name="Wu C."/>
            <person name="Thalhamer T."/>
            <person name="Franca R.F."/>
            <person name="Xiao S."/>
            <person name="Wang C."/>
            <person name="Hotta C."/>
            <person name="Zhu C."/>
            <person name="Hirashima M."/>
            <person name="Anderson A.C."/>
            <person name="Kuchroo V.K."/>
        </authorList>
    </citation>
    <scope>FUNCTION</scope>
    <scope>SUBCELLULAR LOCATION</scope>
</reference>
<reference key="19">
    <citation type="journal article" date="2007" name="Nat. Struct. Mol. Biol.">
        <title>Structures of the Cd44-hyaluronan complex provide insight into a fundamental carbohydrate-protein interaction.</title>
        <authorList>
            <person name="Banerji S."/>
            <person name="Wright A.J."/>
            <person name="Noble M."/>
            <person name="Mahoney D.J."/>
            <person name="Campbell I.D."/>
            <person name="Day A.J."/>
            <person name="Jackson D.G."/>
        </authorList>
    </citation>
    <scope>X-RAY CRYSTALLOGRAPHY (1.25 ANGSTROMS) OF 23-174 ALONE AND IN COMPLEX WITH HYALURONAN</scope>
    <scope>SUBUNIT</scope>
    <scope>DISULFIDE BONDS</scope>
</reference>
<reference key="20">
    <citation type="journal article" date="2008" name="J. Biol. Chem.">
        <title>Structural basis for CD44 recognition by ERM proteins.</title>
        <authorList>
            <person name="Mori T."/>
            <person name="Kitano K."/>
            <person name="Terawaki S."/>
            <person name="Maesaki R."/>
            <person name="Fukami Y."/>
            <person name="Hakoshima T."/>
        </authorList>
    </citation>
    <scope>X-RAY CRYSTALLOGRAPHY (2.10 ANGSTROMS) OF 708-727</scope>
    <scope>INTERACTION WITH RDX</scope>
    <scope>DISULFIDE BOND</scope>
</reference>
<reference key="21">
    <citation type="journal article" date="2014" name="J. Med. Chem.">
        <title>Fragment-based identification of an inducible binding site on cell surface receptor CD44 for the design of protein-carbohydrate interaction inhibitors.</title>
        <authorList>
            <person name="Liu L.K."/>
            <person name="Finzel B.C."/>
        </authorList>
    </citation>
    <scope>X-RAY CRYSTALLOGRAPHY (1.12 ANGSTROMS) OF 23-171</scope>
    <scope>INTERACTION WITH HA</scope>
    <scope>DISULFIDE BOND</scope>
</reference>
<keyword id="KW-0002">3D-structure</keyword>
<keyword id="KW-0025">Alternative splicing</keyword>
<keyword id="KW-0130">Cell adhesion</keyword>
<keyword id="KW-1003">Cell membrane</keyword>
<keyword id="KW-0966">Cell projection</keyword>
<keyword id="KW-1015">Disulfide bond</keyword>
<keyword id="KW-0325">Glycoprotein</keyword>
<keyword id="KW-0472">Membrane</keyword>
<keyword id="KW-0597">Phosphoprotein</keyword>
<keyword id="KW-0654">Proteoglycan</keyword>
<keyword id="KW-0675">Receptor</keyword>
<keyword id="KW-1185">Reference proteome</keyword>
<keyword id="KW-0964">Secreted</keyword>
<keyword id="KW-0732">Signal</keyword>
<keyword id="KW-0765">Sulfation</keyword>
<keyword id="KW-0812">Transmembrane</keyword>
<keyword id="KW-1133">Transmembrane helix</keyword>
<gene>
    <name type="primary">Cd44</name>
    <name type="synonym">Ly-24</name>
</gene>
<feature type="signal peptide" evidence="1">
    <location>
        <begin position="1"/>
        <end position="22"/>
    </location>
</feature>
<feature type="chain" id="PRO_0000026689" description="CD44 antigen">
    <location>
        <begin position="23"/>
        <end position="778"/>
    </location>
</feature>
<feature type="topological domain" description="Extracellular" evidence="3">
    <location>
        <begin position="23"/>
        <end position="685"/>
    </location>
</feature>
<feature type="transmembrane region" description="Helical" evidence="3">
    <location>
        <begin position="686"/>
        <end position="706"/>
    </location>
</feature>
<feature type="topological domain" description="Cytoplasmic" evidence="3">
    <location>
        <begin position="707"/>
        <end position="778"/>
    </location>
</feature>
<feature type="domain" description="Link" evidence="4">
    <location>
        <begin position="34"/>
        <end position="123"/>
    </location>
</feature>
<feature type="region of interest" description="Stem">
    <location>
        <begin position="227"/>
        <end position="685"/>
    </location>
</feature>
<feature type="region of interest" description="Disordered" evidence="5">
    <location>
        <begin position="251"/>
        <end position="277"/>
    </location>
</feature>
<feature type="region of interest" description="Disordered" evidence="5">
    <location>
        <begin position="293"/>
        <end position="338"/>
    </location>
</feature>
<feature type="region of interest" description="Disordered" evidence="5">
    <location>
        <begin position="351"/>
        <end position="370"/>
    </location>
</feature>
<feature type="region of interest" description="Disordered" evidence="5">
    <location>
        <begin position="391"/>
        <end position="591"/>
    </location>
</feature>
<feature type="region of interest" description="Disordered" evidence="5">
    <location>
        <begin position="628"/>
        <end position="678"/>
    </location>
</feature>
<feature type="region of interest" description="Required for interaction with EZR, MSN and RDX and for the co-localization to microvilli" evidence="15">
    <location>
        <begin position="709"/>
        <end position="727"/>
    </location>
</feature>
<feature type="compositionally biased region" description="Low complexity" evidence="5">
    <location>
        <begin position="251"/>
        <end position="270"/>
    </location>
</feature>
<feature type="compositionally biased region" description="Polar residues" evidence="5">
    <location>
        <begin position="293"/>
        <end position="312"/>
    </location>
</feature>
<feature type="compositionally biased region" description="Acidic residues" evidence="5">
    <location>
        <begin position="316"/>
        <end position="325"/>
    </location>
</feature>
<feature type="compositionally biased region" description="Polar residues" evidence="5">
    <location>
        <begin position="361"/>
        <end position="370"/>
    </location>
</feature>
<feature type="compositionally biased region" description="Low complexity" evidence="5">
    <location>
        <begin position="427"/>
        <end position="437"/>
    </location>
</feature>
<feature type="compositionally biased region" description="Polar residues" evidence="5">
    <location>
        <begin position="458"/>
        <end position="482"/>
    </location>
</feature>
<feature type="compositionally biased region" description="Polar residues" evidence="5">
    <location>
        <begin position="509"/>
        <end position="520"/>
    </location>
</feature>
<feature type="compositionally biased region" description="Polar residues" evidence="5">
    <location>
        <begin position="532"/>
        <end position="548"/>
    </location>
</feature>
<feature type="compositionally biased region" description="Polar residues" evidence="5">
    <location>
        <begin position="559"/>
        <end position="571"/>
    </location>
</feature>
<feature type="compositionally biased region" description="Basic and acidic residues" evidence="5">
    <location>
        <begin position="638"/>
        <end position="648"/>
    </location>
</feature>
<feature type="compositionally biased region" description="Polar residues" evidence="5">
    <location>
        <begin position="663"/>
        <end position="676"/>
    </location>
</feature>
<feature type="binding site" evidence="6">
    <location>
        <position position="43"/>
    </location>
    <ligand>
        <name>hyaluronan</name>
        <dbReference type="ChEBI" id="CHEBI:132153"/>
    </ligand>
</feature>
<feature type="binding site" evidence="6">
    <location>
        <position position="80"/>
    </location>
    <ligand>
        <name>hyaluronan</name>
        <dbReference type="ChEBI" id="CHEBI:132153"/>
    </ligand>
</feature>
<feature type="binding site" evidence="6">
    <location>
        <position position="81"/>
    </location>
    <ligand>
        <name>hyaluronan</name>
        <dbReference type="ChEBI" id="CHEBI:132153"/>
    </ligand>
</feature>
<feature type="binding site" evidence="6">
    <location>
        <position position="107"/>
    </location>
    <ligand>
        <name>hyaluronan</name>
        <dbReference type="ChEBI" id="CHEBI:132153"/>
    </ligand>
</feature>
<feature type="modified residue" description="Sulfotyrosine" evidence="1">
    <location>
        <position position="410"/>
    </location>
</feature>
<feature type="modified residue" description="Phosphoserine; by PKC" evidence="2">
    <location>
        <position position="708"/>
    </location>
</feature>
<feature type="modified residue" description="Phosphothreonine" evidence="25 26">
    <location>
        <position position="726"/>
    </location>
</feature>
<feature type="modified residue" description="Phosphoserine" evidence="25">
    <location>
        <position position="733"/>
    </location>
</feature>
<feature type="modified residue" description="Phosphoserine" evidence="25 26">
    <location>
        <position position="742"/>
    </location>
</feature>
<feature type="glycosylation site" description="N-linked (GlcNAc...) asparagine" evidence="3">
    <location>
        <position position="27"/>
    </location>
</feature>
<feature type="glycosylation site" description="N-linked (GlcNAc...) asparagine" evidence="3">
    <location>
        <position position="59"/>
    </location>
</feature>
<feature type="glycosylation site" description="N-linked (GlcNAc...) asparagine" evidence="3">
    <location>
        <position position="102"/>
    </location>
</feature>
<feature type="glycosylation site" description="N-linked (GlcNAc...) asparagine" evidence="3">
    <location>
        <position position="113"/>
    </location>
</feature>
<feature type="glycosylation site" description="N-linked (GlcNAc...) asparagine" evidence="3">
    <location>
        <position position="123"/>
    </location>
</feature>
<feature type="glycosylation site" description="O-linked (Xyl...) (chondroitin sulfate) serine" evidence="2">
    <location>
        <position position="183"/>
    </location>
</feature>
<feature type="glycosylation site" description="N-linked (GlcNAc...) asparagine" evidence="3">
    <location>
        <position position="368"/>
    </location>
</feature>
<feature type="glycosylation site" description="N-linked (GlcNAc...) asparagine" evidence="3">
    <location>
        <position position="425"/>
    </location>
</feature>
<feature type="glycosylation site" description="N-linked (GlcNAc...) asparagine" evidence="3">
    <location>
        <position position="529"/>
    </location>
</feature>
<feature type="glycosylation site" description="N-linked (GlcNAc...) asparagine" evidence="3">
    <location>
        <position position="545"/>
    </location>
</feature>
<feature type="glycosylation site" description="N-linked (GlcNAc...) asparagine" evidence="3">
    <location>
        <position position="603"/>
    </location>
</feature>
<feature type="disulfide bond" evidence="4 6 8 11">
    <location>
        <begin position="30"/>
        <end position="132"/>
    </location>
</feature>
<feature type="disulfide bond" evidence="4 6 8 11">
    <location>
        <begin position="55"/>
        <end position="121"/>
    </location>
</feature>
<feature type="disulfide bond" evidence="4 6 8 11">
    <location>
        <begin position="79"/>
        <end position="99"/>
    </location>
</feature>
<feature type="splice variant" id="VSP_005329" description="In isoform 13." evidence="17 18 19 20 21">
    <location>
        <begin position="223"/>
        <end position="637"/>
    </location>
</feature>
<feature type="splice variant" id="VSP_005328" description="In isoform 12." evidence="16">
    <location>
        <begin position="223"/>
        <end position="539"/>
    </location>
</feature>
<feature type="splice variant" id="VSP_005327" description="In isoform 7." evidence="16 22">
    <location>
        <begin position="223"/>
        <end position="504"/>
    </location>
</feature>
<feature type="splice variant" id="VSP_005326" description="In isoform 6." evidence="16 22">
    <location>
        <begin position="223"/>
        <end position="424"/>
    </location>
</feature>
<feature type="splice variant" id="VSP_007332" description="In isoform 5 and isoform 9." evidence="22 23">
    <location>
        <begin position="223"/>
        <end position="383"/>
    </location>
</feature>
<feature type="splice variant" id="VSP_007331" description="In isoform 4." evidence="16 22">
    <location>
        <begin position="223"/>
        <end position="346"/>
    </location>
</feature>
<feature type="splice variant" id="VSP_007330" description="In isoform 3 and isoform 8." evidence="22">
    <location>
        <begin position="223"/>
        <end position="303"/>
    </location>
</feature>
<feature type="splice variant" id="VSP_007329" description="In isoform 2." evidence="22">
    <location>
        <begin position="223"/>
        <end position="264"/>
    </location>
</feature>
<feature type="splice variant" id="VSP_007334" description="In isoform 8." evidence="22">
    <location>
        <begin position="424"/>
        <end position="504"/>
    </location>
</feature>
<feature type="splice variant" id="VSP_007335" description="In isoform 9." evidence="23">
    <location>
        <begin position="463"/>
        <end position="504"/>
    </location>
</feature>
<feature type="splice variant" id="VSP_007338" description="In isoform 11." evidence="24">
    <original>TKSSAKDARRGGSLPTDTTTSVEG</original>
    <variation>VRIIKSNWLLSRNQDVMGVSGGGC</variation>
    <location>
        <begin position="569"/>
        <end position="592"/>
    </location>
</feature>
<feature type="splice variant" id="VSP_007336" description="In isoform 10." evidence="24">
    <original>TKSSAKDARRGG</original>
    <variation>VCLVVVADFSAL</variation>
    <location>
        <begin position="569"/>
        <end position="580"/>
    </location>
</feature>
<feature type="splice variant" id="VSP_007337" description="In isoform 10." evidence="24">
    <location>
        <begin position="581"/>
        <end position="778"/>
    </location>
</feature>
<feature type="splice variant" id="VSP_007339" description="In isoform 11." evidence="24">
    <location>
        <begin position="593"/>
        <end position="778"/>
    </location>
</feature>
<feature type="splice variant" id="VSP_007333" description="In isoform 13." evidence="17 18 19 20 21">
    <original>G</original>
    <variation>R</variation>
    <location>
        <position position="638"/>
    </location>
</feature>
<feature type="sequence variant" description="In Ly-24.2." evidence="13">
    <original>H</original>
    <variation>HPH</variation>
    <location>
        <position position="21"/>
    </location>
</feature>
<feature type="sequence variant" description="In Ly-24.2." evidence="13">
    <original>G</original>
    <variation>S</variation>
    <location>
        <position position="194"/>
    </location>
</feature>
<feature type="mutagenesis site" description="Loss of interaction with EZR, MSN and RDX and co-localization to microvilli with EZR, MSN and RDX." evidence="15">
    <original>KKK</original>
    <variation>QIN</variation>
    <location>
        <begin position="715"/>
        <end position="717"/>
    </location>
</feature>
<feature type="sequence conflict" description="In Ref. 4 and 9." evidence="24" ref="4 9">
    <original>T</original>
    <variation>K</variation>
    <location>
        <position position="326"/>
    </location>
</feature>
<feature type="sequence conflict" description="In Ref. 9." evidence="24" ref="9">
    <original>T</original>
    <variation>S</variation>
    <location>
        <position position="348"/>
    </location>
</feature>
<feature type="sequence conflict" description="In Ref. 4, 8 and 9." evidence="24" ref="4 8 9">
    <original>Y</original>
    <variation>H</variation>
    <location>
        <position position="559"/>
    </location>
</feature>
<feature type="sequence conflict" description="In Ref. 4, 8 and 9." evidence="24" ref="4 8 9">
    <original>S</original>
    <variation>G</variation>
    <location>
        <position position="572"/>
    </location>
</feature>
<feature type="sequence conflict" description="In Ref. 7." evidence="24" ref="7">
    <original>D</original>
    <variation>RD</variation>
    <location>
        <position position="639"/>
    </location>
</feature>
<feature type="strand" evidence="28">
    <location>
        <begin position="23"/>
        <end position="28"/>
    </location>
</feature>
<feature type="strand" evidence="28">
    <location>
        <begin position="35"/>
        <end position="40"/>
    </location>
</feature>
<feature type="helix" evidence="28">
    <location>
        <begin position="48"/>
        <end position="57"/>
    </location>
</feature>
<feature type="helix" evidence="28">
    <location>
        <begin position="65"/>
        <end position="73"/>
    </location>
</feature>
<feature type="strand" evidence="28">
    <location>
        <begin position="85"/>
        <end position="94"/>
    </location>
</feature>
<feature type="helix" evidence="28">
    <location>
        <begin position="100"/>
        <end position="102"/>
    </location>
</feature>
<feature type="strand" evidence="28">
    <location>
        <begin position="105"/>
        <end position="108"/>
    </location>
</feature>
<feature type="strand" evidence="28">
    <location>
        <begin position="117"/>
        <end position="122"/>
    </location>
</feature>
<feature type="strand" evidence="28">
    <location>
        <begin position="128"/>
        <end position="131"/>
    </location>
</feature>
<feature type="strand" evidence="28">
    <location>
        <begin position="142"/>
        <end position="152"/>
    </location>
</feature>
<feature type="strand" evidence="28">
    <location>
        <begin position="157"/>
        <end position="163"/>
    </location>
</feature>
<feature type="helix" evidence="28">
    <location>
        <begin position="168"/>
        <end position="170"/>
    </location>
</feature>
<feature type="strand" evidence="27">
    <location>
        <begin position="715"/>
        <end position="719"/>
    </location>
</feature>
<evidence type="ECO:0000250" key="1"/>
<evidence type="ECO:0000250" key="2">
    <source>
        <dbReference type="UniProtKB" id="P16070"/>
    </source>
</evidence>
<evidence type="ECO:0000255" key="3"/>
<evidence type="ECO:0000255" key="4">
    <source>
        <dbReference type="PROSITE-ProRule" id="PRU00323"/>
    </source>
</evidence>
<evidence type="ECO:0000256" key="5">
    <source>
        <dbReference type="SAM" id="MobiDB-lite"/>
    </source>
</evidence>
<evidence type="ECO:0000269" key="6">
    <source>
    </source>
</evidence>
<evidence type="ECO:0000269" key="7">
    <source>
    </source>
</evidence>
<evidence type="ECO:0000269" key="8">
    <source>
    </source>
</evidence>
<evidence type="ECO:0000269" key="9">
    <source>
    </source>
</evidence>
<evidence type="ECO:0000269" key="10">
    <source>
    </source>
</evidence>
<evidence type="ECO:0000269" key="11">
    <source>
    </source>
</evidence>
<evidence type="ECO:0000269" key="12">
    <source>
    </source>
</evidence>
<evidence type="ECO:0000269" key="13">
    <source>
    </source>
</evidence>
<evidence type="ECO:0000269" key="14">
    <source>
    </source>
</evidence>
<evidence type="ECO:0000269" key="15">
    <source>
    </source>
</evidence>
<evidence type="ECO:0000303" key="16">
    <source>
    </source>
</evidence>
<evidence type="ECO:0000303" key="17">
    <source>
    </source>
</evidence>
<evidence type="ECO:0000303" key="18">
    <source>
    </source>
</evidence>
<evidence type="ECO:0000303" key="19">
    <source>
    </source>
</evidence>
<evidence type="ECO:0000303" key="20">
    <source>
    </source>
</evidence>
<evidence type="ECO:0000303" key="21">
    <source>
    </source>
</evidence>
<evidence type="ECO:0000303" key="22">
    <source>
    </source>
</evidence>
<evidence type="ECO:0000303" key="23">
    <source>
    </source>
</evidence>
<evidence type="ECO:0000305" key="24"/>
<evidence type="ECO:0007744" key="25">
    <source>
    </source>
</evidence>
<evidence type="ECO:0007744" key="26">
    <source>
    </source>
</evidence>
<evidence type="ECO:0007829" key="27">
    <source>
        <dbReference type="PDB" id="2ZPY"/>
    </source>
</evidence>
<evidence type="ECO:0007829" key="28">
    <source>
        <dbReference type="PDB" id="5SBQ"/>
    </source>
</evidence>
<sequence>MDKFWWHTAWGLCLLQLSLAHQQIDLNVTCRYAGVFHVEKNGRYSISRTEAADLCQAFNSTLPTMDQMKLALSKGFETCRYGFIEGNVVIPRIHPNAICAANHTGVYILVTSNTSHYDTYCFNASAPPEEDCTSVTDLPNSFDGPVTITIVNRDGTRYSKKGEYRTHQEDIDASNIIDDDVSSGSTIEKSTPEGYILHTYLPTEQPTGDQDDSFFIRSTLATIASTVHSKSHAAAQKQNNWIWSWFGNSQSTTQTQEPTTSATTALMTTPETPPKRQEAQNWFSWLFQPSESKSHLHTTTKMPGTESNTNPTGWEPNEENEDETDTYPSFSGSGIDDDEDFISSTIATTPRVSARTEDNQDWTQWKPNHSNPEVLLQTTTRMADIDRISTSAHGENWTPEPQPPFNNHEYQDEEETPHATSTTPNSTAEAAATQQETWFQNGWQGKNPPTPSEDSHVTEGTTASAHNNHPSQRITTQSQEDVSWTDFFDPISHPMGQGHQTESKDTDSSHSTTLQPTAAPNTHLVEDLNRTGPLSVTTPQSHSQNFSTLHGEPEEDENYPTTSILPSSTKSSAKDARRGGSLPTDTTTSVEGYTFQYPDTMENGTLFPVTPAKTEVFGETEVTLATDSNVNVDGSLPGDRDSSKDSRGSSRTVTHGSELAGHSSANQDSGVTTTSGPMRRPQIPEWLIILASLLALALILAVCIAVNSRRRCGQKKKLVINGGNGTVEDRKPSELNGEASKSQEMVHLVNKEPSETPDQCMTADETRNLQSVDMKIGV</sequence>
<organism>
    <name type="scientific">Mus musculus</name>
    <name type="common">Mouse</name>
    <dbReference type="NCBI Taxonomy" id="10090"/>
    <lineage>
        <taxon>Eukaryota</taxon>
        <taxon>Metazoa</taxon>
        <taxon>Chordata</taxon>
        <taxon>Craniata</taxon>
        <taxon>Vertebrata</taxon>
        <taxon>Euteleostomi</taxon>
        <taxon>Mammalia</taxon>
        <taxon>Eutheria</taxon>
        <taxon>Euarchontoglires</taxon>
        <taxon>Glires</taxon>
        <taxon>Rodentia</taxon>
        <taxon>Myomorpha</taxon>
        <taxon>Muroidea</taxon>
        <taxon>Muridae</taxon>
        <taxon>Murinae</taxon>
        <taxon>Mus</taxon>
        <taxon>Mus</taxon>
    </lineage>
</organism>
<protein>
    <recommendedName>
        <fullName>CD44 antigen</fullName>
    </recommendedName>
    <alternativeName>
        <fullName>Extracellular matrix receptor III</fullName>
        <shortName>ECMR-III</shortName>
    </alternativeName>
    <alternativeName>
        <fullName>GP90 lymphocyte homing/adhesion receptor</fullName>
    </alternativeName>
    <alternativeName>
        <fullName>HUTCH-I</fullName>
    </alternativeName>
    <alternativeName>
        <fullName>Hermes antigen</fullName>
    </alternativeName>
    <alternativeName>
        <fullName>Hyaluronate receptor</fullName>
    </alternativeName>
    <alternativeName>
        <fullName>Lymphocyte antigen 24</fullName>
        <shortName>Ly-24</shortName>
    </alternativeName>
    <alternativeName>
        <fullName>Phagocytic glycoprotein 1</fullName>
        <shortName>PGP-1</shortName>
    </alternativeName>
    <alternativeName>
        <fullName>Phagocytic glycoprotein I</fullName>
        <shortName>PGP-I</shortName>
    </alternativeName>
    <cdAntigenName>CD44</cdAntigenName>
</protein>
<proteinExistence type="evidence at protein level"/>
<name>CD44_MOUSE</name>
<comment type="function">
    <text evidence="2 12 14">Cell-surface receptor that plays a role in cell-cell interactions, cell adhesion and migration, helping them to sense and respond to changes in the tissue microenvironment. Participates thereby in a wide variety of cellular functions including the activation, recirculation and homing of T-lymphocytes, hematopoiesis, inflammation and response to bacterial infection. Engages, through its ectodomain, extracellular matrix components such as hyaluronan/HA, collagen, growth factors, cytokines or proteases and serves as a platform for signal transduction by assembling, via its cytoplasmic domain, protein complexes containing receptor kinases and membrane proteases (PubMed:25065622, PubMed:8343954). Such effectors include PKN2, the RhoGTPases RAC1 and RHOA, Rho-kinases and phospholipase C that coordinate signaling pathways promoting calcium mobilization and actin-mediated cytoskeleton reorganization essential for cell migration and adhesion (By similarity).</text>
</comment>
<comment type="subunit">
    <text evidence="2 7 8 9 11 14 15">Interacts with PKN2 (PubMed:17403031). Interacts with TIAM1 and TIAM2 (PubMed:19893486). Interacts with HA, as well as other glycosaminoglycans, collagen, laminin, and fibronectin via its N-terminal segment (PubMed:24606063). Interacts with UNC119. Interacts with PDPN (via extracellular domain); this interaction is required for PDPN-mediated directional migration and regulation of lamellipodia extension/stabilization during cell spreading and migration (By similarity). Interacts with RDX, EZR and MSN (via FERM domain) (PubMed:18753140, PubMed:9472040). Interacts with EGFR (By similarity). Interacts with CD74; this complex is essential for the MIF-induced signaling cascade that results in B cell survival (PubMed:8343954).</text>
</comment>
<comment type="interaction">
    <interactant intactId="EBI-7565891">
        <id>P15379</id>
    </interactant>
    <interactant intactId="EBI-8377586">
        <id>O08573</id>
        <label>Lgals9</label>
    </interactant>
    <organismsDiffer>false</organismsDiffer>
    <experiments>2</experiments>
</comment>
<comment type="interaction">
    <interactant intactId="EBI-7565891">
        <id>P15379</id>
    </interactant>
    <interactant intactId="EBI-2899393">
        <id>Q64729</id>
        <label>Tgfbr1</label>
    </interactant>
    <organismsDiffer>false</organismsDiffer>
    <experiments>4</experiments>
</comment>
<comment type="interaction">
    <interactant intactId="EBI-7565891">
        <id>P15379</id>
    </interactant>
    <interactant intactId="EBI-1030321">
        <id>Q60610</id>
        <label>Tiam1</label>
    </interactant>
    <organismsDiffer>false</organismsDiffer>
    <experiments>8</experiments>
</comment>
<comment type="interaction">
    <interactant intactId="EBI-7565891">
        <id>P15379</id>
    </interactant>
    <interactant intactId="EBI-7565978">
        <id>Q6ZPF3</id>
        <label>Tiam2</label>
    </interactant>
    <organismsDiffer>false</organismsDiffer>
    <experiments>8</experiments>
</comment>
<comment type="subcellular location">
    <subcellularLocation>
        <location evidence="7 12">Cell membrane</location>
        <topology evidence="7">Single-pass type I membrane protein</topology>
    </subcellularLocation>
    <subcellularLocation>
        <location evidence="15">Cell projection</location>
        <location evidence="15">Microvillus</location>
    </subcellularLocation>
    <subcellularLocation>
        <location evidence="2">Secreted</location>
    </subcellularLocation>
    <text evidence="7 15">Colocalizes with actin in membrane protrusionFs at wounding edges. Co-localizes with RDX, EZR and MSN in microvilli.</text>
</comment>
<comment type="alternative products">
    <event type="alternative splicing"/>
    <isoform>
        <id>P15379-14</id>
        <name>1</name>
        <sequence type="displayed"/>
    </isoform>
    <isoform>
        <id>P15379-7</id>
        <name>2</name>
        <sequence type="described" ref="VSP_007329"/>
    </isoform>
    <isoform>
        <id>P15379-8</id>
        <name>3</name>
        <sequence type="described" ref="VSP_007330"/>
    </isoform>
    <isoform>
        <id>P15379-4</id>
        <name>4</name>
        <name>M2</name>
        <sequence type="described" ref="VSP_007331"/>
    </isoform>
    <isoform>
        <id>P15379-9</id>
        <name>5</name>
        <sequence type="described" ref="VSP_007332"/>
    </isoform>
    <isoform>
        <id>P15379-5</id>
        <name>6</name>
        <name>M3</name>
        <sequence type="described" ref="VSP_005326"/>
    </isoform>
    <isoform>
        <id>P15379-6</id>
        <name>7</name>
        <name>M4</name>
        <sequence type="described" ref="VSP_005327"/>
    </isoform>
    <isoform>
        <id>P15379-10</id>
        <name>8</name>
        <sequence type="described" ref="VSP_007330 VSP_007334"/>
    </isoform>
    <isoform>
        <id>P15379-11</id>
        <name>9</name>
        <sequence type="described" ref="VSP_007332 VSP_007335"/>
    </isoform>
    <isoform>
        <id>P15379-12</id>
        <name>10</name>
        <sequence type="described" ref="VSP_007336 VSP_007337"/>
    </isoform>
    <isoform>
        <id>P15379-13</id>
        <name>11</name>
        <sequence type="described" ref="VSP_007338 VSP_007339"/>
    </isoform>
    <isoform>
        <id>P15379-3</id>
        <name>12</name>
        <name>M1</name>
        <sequence type="described" ref="VSP_005328"/>
    </isoform>
    <isoform>
        <id>P15379-2</id>
        <name>13</name>
        <name>M0</name>
        <sequence type="described" ref="VSP_005329 VSP_007333"/>
    </isoform>
</comment>
<comment type="tissue specificity">
    <text evidence="10">Expressed in the intestinal epithelium.</text>
</comment>
<comment type="domain">
    <text>The lectin-like LINK domain is responsible for hyaluronan binding.</text>
</comment>
<comment type="PTM">
    <text evidence="2">N-glycosylated.</text>
</comment>
<comment type="PTM">
    <text evidence="2">O-glycosylated; contains chondroitin sulfate glycans which can be more or less sulfated.</text>
</comment>
<comment type="PTM">
    <text evidence="1">Phosphorylated; activation of PKC results in the dephosphorylation of Ser-742 (constitutive phosphorylation site), and the phosphorylation of Ser-708.</text>
</comment>
<comment type="polymorphism">
    <text>Two allelic forms of this glycoprotein, PGP-1.1 and PGP-1.2, have been reported. The expressed product is PGP-1.1 (Ly-24.1).</text>
</comment>
<accession>P15379</accession>
<accession>Q05732</accession>
<accession>Q61395</accession>
<accession>Q62060</accession>
<accession>Q62061</accession>
<accession>Q62062</accession>
<accession>Q62063</accession>
<accession>Q62408</accession>
<accession>Q62409</accession>
<accession>Q64296</accession>
<accession>Q99J14</accession>
<accession>Q9QYX8</accession>